<reference key="1">
    <citation type="journal article" date="2008" name="Environ. Microbiol.">
        <title>The complete genome sequence of Moorella thermoacetica (f. Clostridium thermoaceticum).</title>
        <authorList>
            <person name="Pierce E."/>
            <person name="Xie G."/>
            <person name="Barabote R.D."/>
            <person name="Saunders E."/>
            <person name="Han C.S."/>
            <person name="Detter J.C."/>
            <person name="Richardson P."/>
            <person name="Brettin T.S."/>
            <person name="Das A."/>
            <person name="Ljungdahl L.G."/>
            <person name="Ragsdale S.W."/>
        </authorList>
    </citation>
    <scope>NUCLEOTIDE SEQUENCE [LARGE SCALE GENOMIC DNA]</scope>
    <source>
        <strain>ATCC 39073 / JCM 9320</strain>
    </source>
</reference>
<organism>
    <name type="scientific">Moorella thermoacetica (strain ATCC 39073 / JCM 9320)</name>
    <dbReference type="NCBI Taxonomy" id="264732"/>
    <lineage>
        <taxon>Bacteria</taxon>
        <taxon>Bacillati</taxon>
        <taxon>Bacillota</taxon>
        <taxon>Clostridia</taxon>
        <taxon>Moorellales</taxon>
        <taxon>Moorellaceae</taxon>
        <taxon>Moorella</taxon>
    </lineage>
</organism>
<sequence length="274" mass="30189">MPELPEVETIKRTLTPCLREQKIARVEVYHPGVIAAPDPETFSRLLAGRIITGLDRRGKYLLVHLSGEYCLVVHLRMTGRLVFTEGAAPLAPHTHVVFSLAGGPSLRFVDTRRFGRLYLAAKAEVETLPGLRDLGPEPLDPAFDALALAAILAGRRRPIKQVLLDQRLVAGIGNIYADEMLFAAGIDPRRPAASLNHEEVARLRGAMQRVLEQGIANRGTSIRDYVDGSGRQGSNQEHLQVYGRTGRPCPRCGQPLERVRLGGRSTHFCPRCQV</sequence>
<accession>Q2RHE9</accession>
<comment type="function">
    <text evidence="2">Involved in base excision repair of DNA damaged by oxidation or by mutagenic agents. Acts as a DNA glycosylase that recognizes and removes damaged bases. Has a preference for oxidized purines, such as 7,8-dihydro-8-oxoguanine (8-oxoG). Has AP (apurinic/apyrimidinic) lyase activity and introduces nicks in the DNA strand. Cleaves the DNA backbone by beta-delta elimination to generate a single-strand break at the site of the removed base with both 3'- and 5'-phosphates.</text>
</comment>
<comment type="catalytic activity">
    <reaction evidence="2">
        <text>Hydrolysis of DNA containing ring-opened 7-methylguanine residues, releasing 2,6-diamino-4-hydroxy-5-(N-methyl)formamidopyrimidine.</text>
        <dbReference type="EC" id="3.2.2.23"/>
    </reaction>
</comment>
<comment type="catalytic activity">
    <reaction evidence="2">
        <text>2'-deoxyribonucleotide-(2'-deoxyribose 5'-phosphate)-2'-deoxyribonucleotide-DNA = a 3'-end 2'-deoxyribonucleotide-(2,3-dehydro-2,3-deoxyribose 5'-phosphate)-DNA + a 5'-end 5'-phospho-2'-deoxyribonucleoside-DNA + H(+)</text>
        <dbReference type="Rhea" id="RHEA:66592"/>
        <dbReference type="Rhea" id="RHEA-COMP:13180"/>
        <dbReference type="Rhea" id="RHEA-COMP:16897"/>
        <dbReference type="Rhea" id="RHEA-COMP:17067"/>
        <dbReference type="ChEBI" id="CHEBI:15378"/>
        <dbReference type="ChEBI" id="CHEBI:136412"/>
        <dbReference type="ChEBI" id="CHEBI:157695"/>
        <dbReference type="ChEBI" id="CHEBI:167181"/>
        <dbReference type="EC" id="4.2.99.18"/>
    </reaction>
</comment>
<comment type="cofactor">
    <cofactor evidence="2">
        <name>Zn(2+)</name>
        <dbReference type="ChEBI" id="CHEBI:29105"/>
    </cofactor>
    <text evidence="2">Binds 1 zinc ion per subunit.</text>
</comment>
<comment type="subunit">
    <text evidence="2">Monomer.</text>
</comment>
<comment type="similarity">
    <text evidence="2">Belongs to the FPG family.</text>
</comment>
<dbReference type="EC" id="3.2.2.23" evidence="2"/>
<dbReference type="EC" id="4.2.99.18" evidence="2"/>
<dbReference type="EMBL" id="CP000232">
    <property type="protein sequence ID" value="ABC20140.1"/>
    <property type="molecule type" value="Genomic_DNA"/>
</dbReference>
<dbReference type="RefSeq" id="YP_430683.1">
    <property type="nucleotide sequence ID" value="NC_007644.1"/>
</dbReference>
<dbReference type="SMR" id="Q2RHE9"/>
<dbReference type="STRING" id="264732.Moth_1840"/>
<dbReference type="EnsemblBacteria" id="ABC20140">
    <property type="protein sequence ID" value="ABC20140"/>
    <property type="gene ID" value="Moth_1840"/>
</dbReference>
<dbReference type="KEGG" id="mta:Moth_1840"/>
<dbReference type="PATRIC" id="fig|264732.11.peg.1992"/>
<dbReference type="eggNOG" id="COG0266">
    <property type="taxonomic scope" value="Bacteria"/>
</dbReference>
<dbReference type="HOGENOM" id="CLU_038423_1_2_9"/>
<dbReference type="OrthoDB" id="9800855at2"/>
<dbReference type="GO" id="GO:0034039">
    <property type="term" value="F:8-oxo-7,8-dihydroguanine DNA N-glycosylase activity"/>
    <property type="evidence" value="ECO:0007669"/>
    <property type="project" value="TreeGrafter"/>
</dbReference>
<dbReference type="GO" id="GO:0140078">
    <property type="term" value="F:class I DNA-(apurinic or apyrimidinic site) endonuclease activity"/>
    <property type="evidence" value="ECO:0007669"/>
    <property type="project" value="UniProtKB-EC"/>
</dbReference>
<dbReference type="GO" id="GO:0003684">
    <property type="term" value="F:damaged DNA binding"/>
    <property type="evidence" value="ECO:0007669"/>
    <property type="project" value="InterPro"/>
</dbReference>
<dbReference type="GO" id="GO:0008270">
    <property type="term" value="F:zinc ion binding"/>
    <property type="evidence" value="ECO:0007669"/>
    <property type="project" value="UniProtKB-UniRule"/>
</dbReference>
<dbReference type="GO" id="GO:0006284">
    <property type="term" value="P:base-excision repair"/>
    <property type="evidence" value="ECO:0007669"/>
    <property type="project" value="InterPro"/>
</dbReference>
<dbReference type="CDD" id="cd08966">
    <property type="entry name" value="EcFpg-like_N"/>
    <property type="match status" value="1"/>
</dbReference>
<dbReference type="FunFam" id="1.10.8.50:FF:000003">
    <property type="entry name" value="Formamidopyrimidine-DNA glycosylase"/>
    <property type="match status" value="1"/>
</dbReference>
<dbReference type="Gene3D" id="1.10.8.50">
    <property type="match status" value="1"/>
</dbReference>
<dbReference type="Gene3D" id="3.20.190.10">
    <property type="entry name" value="MutM-like, N-terminal"/>
    <property type="match status" value="1"/>
</dbReference>
<dbReference type="HAMAP" id="MF_00103">
    <property type="entry name" value="Fapy_DNA_glycosyl"/>
    <property type="match status" value="1"/>
</dbReference>
<dbReference type="InterPro" id="IPR015886">
    <property type="entry name" value="DNA_glyclase/AP_lyase_DNA-bd"/>
</dbReference>
<dbReference type="InterPro" id="IPR015887">
    <property type="entry name" value="DNA_glyclase_Znf_dom_DNA_BS"/>
</dbReference>
<dbReference type="InterPro" id="IPR020629">
    <property type="entry name" value="Formamido-pyr_DNA_Glyclase"/>
</dbReference>
<dbReference type="InterPro" id="IPR012319">
    <property type="entry name" value="FPG_cat"/>
</dbReference>
<dbReference type="InterPro" id="IPR035937">
    <property type="entry name" value="MutM-like_N-ter"/>
</dbReference>
<dbReference type="InterPro" id="IPR010979">
    <property type="entry name" value="Ribosomal_uS13-like_H2TH"/>
</dbReference>
<dbReference type="InterPro" id="IPR000214">
    <property type="entry name" value="Znf_DNA_glyclase/AP_lyase"/>
</dbReference>
<dbReference type="InterPro" id="IPR010663">
    <property type="entry name" value="Znf_FPG/IleRS"/>
</dbReference>
<dbReference type="NCBIfam" id="TIGR00577">
    <property type="entry name" value="fpg"/>
    <property type="match status" value="1"/>
</dbReference>
<dbReference type="NCBIfam" id="NF002211">
    <property type="entry name" value="PRK01103.1"/>
    <property type="match status" value="1"/>
</dbReference>
<dbReference type="PANTHER" id="PTHR22993">
    <property type="entry name" value="FORMAMIDOPYRIMIDINE-DNA GLYCOSYLASE"/>
    <property type="match status" value="1"/>
</dbReference>
<dbReference type="PANTHER" id="PTHR22993:SF9">
    <property type="entry name" value="FORMAMIDOPYRIMIDINE-DNA GLYCOSYLASE"/>
    <property type="match status" value="1"/>
</dbReference>
<dbReference type="Pfam" id="PF01149">
    <property type="entry name" value="Fapy_DNA_glyco"/>
    <property type="match status" value="1"/>
</dbReference>
<dbReference type="Pfam" id="PF06831">
    <property type="entry name" value="H2TH"/>
    <property type="match status" value="1"/>
</dbReference>
<dbReference type="Pfam" id="PF06827">
    <property type="entry name" value="zf-FPG_IleRS"/>
    <property type="match status" value="1"/>
</dbReference>
<dbReference type="SMART" id="SM00898">
    <property type="entry name" value="Fapy_DNA_glyco"/>
    <property type="match status" value="1"/>
</dbReference>
<dbReference type="SMART" id="SM01232">
    <property type="entry name" value="H2TH"/>
    <property type="match status" value="1"/>
</dbReference>
<dbReference type="SUPFAM" id="SSF57716">
    <property type="entry name" value="Glucocorticoid receptor-like (DNA-binding domain)"/>
    <property type="match status" value="1"/>
</dbReference>
<dbReference type="SUPFAM" id="SSF81624">
    <property type="entry name" value="N-terminal domain of MutM-like DNA repair proteins"/>
    <property type="match status" value="1"/>
</dbReference>
<dbReference type="SUPFAM" id="SSF46946">
    <property type="entry name" value="S13-like H2TH domain"/>
    <property type="match status" value="1"/>
</dbReference>
<dbReference type="PROSITE" id="PS51068">
    <property type="entry name" value="FPG_CAT"/>
    <property type="match status" value="1"/>
</dbReference>
<dbReference type="PROSITE" id="PS01242">
    <property type="entry name" value="ZF_FPG_1"/>
    <property type="match status" value="1"/>
</dbReference>
<dbReference type="PROSITE" id="PS51066">
    <property type="entry name" value="ZF_FPG_2"/>
    <property type="match status" value="1"/>
</dbReference>
<proteinExistence type="inferred from homology"/>
<feature type="initiator methionine" description="Removed" evidence="1">
    <location>
        <position position="1"/>
    </location>
</feature>
<feature type="chain" id="PRO_1000008716" description="Formamidopyrimidine-DNA glycosylase">
    <location>
        <begin position="2"/>
        <end position="274"/>
    </location>
</feature>
<feature type="zinc finger region" description="FPG-type" evidence="2">
    <location>
        <begin position="240"/>
        <end position="274"/>
    </location>
</feature>
<feature type="active site" description="Schiff-base intermediate with DNA" evidence="2">
    <location>
        <position position="2"/>
    </location>
</feature>
<feature type="active site" description="Proton donor" evidence="2">
    <location>
        <position position="3"/>
    </location>
</feature>
<feature type="active site" description="Proton donor; for beta-elimination activity" evidence="2">
    <location>
        <position position="59"/>
    </location>
</feature>
<feature type="active site" description="Proton donor; for delta-elimination activity" evidence="2">
    <location>
        <position position="264"/>
    </location>
</feature>
<feature type="binding site" evidence="2">
    <location>
        <position position="93"/>
    </location>
    <ligand>
        <name>DNA</name>
        <dbReference type="ChEBI" id="CHEBI:16991"/>
    </ligand>
</feature>
<feature type="binding site" evidence="2">
    <location>
        <position position="112"/>
    </location>
    <ligand>
        <name>DNA</name>
        <dbReference type="ChEBI" id="CHEBI:16991"/>
    </ligand>
</feature>
<feature type="binding site" evidence="2">
    <location>
        <position position="155"/>
    </location>
    <ligand>
        <name>DNA</name>
        <dbReference type="ChEBI" id="CHEBI:16991"/>
    </ligand>
</feature>
<evidence type="ECO:0000250" key="1"/>
<evidence type="ECO:0000255" key="2">
    <source>
        <dbReference type="HAMAP-Rule" id="MF_00103"/>
    </source>
</evidence>
<gene>
    <name evidence="2" type="primary">mutM</name>
    <name evidence="2" type="synonym">fpg</name>
    <name type="ordered locus">Moth_1840</name>
</gene>
<name>FPG_MOOTA</name>
<protein>
    <recommendedName>
        <fullName evidence="2">Formamidopyrimidine-DNA glycosylase</fullName>
        <shortName evidence="2">Fapy-DNA glycosylase</shortName>
        <ecNumber evidence="2">3.2.2.23</ecNumber>
    </recommendedName>
    <alternativeName>
        <fullName evidence="2">DNA-(apurinic or apyrimidinic site) lyase MutM</fullName>
        <shortName evidence="2">AP lyase MutM</shortName>
        <ecNumber evidence="2">4.2.99.18</ecNumber>
    </alternativeName>
</protein>
<keyword id="KW-0227">DNA damage</keyword>
<keyword id="KW-0234">DNA repair</keyword>
<keyword id="KW-0238">DNA-binding</keyword>
<keyword id="KW-0326">Glycosidase</keyword>
<keyword id="KW-0378">Hydrolase</keyword>
<keyword id="KW-0456">Lyase</keyword>
<keyword id="KW-0479">Metal-binding</keyword>
<keyword id="KW-0511">Multifunctional enzyme</keyword>
<keyword id="KW-0862">Zinc</keyword>
<keyword id="KW-0863">Zinc-finger</keyword>